<accession>P54226</accession>
<evidence type="ECO:0000250" key="1">
    <source>
        <dbReference type="UniProtKB" id="P00362"/>
    </source>
</evidence>
<evidence type="ECO:0000269" key="2">
    <source>
    </source>
</evidence>
<evidence type="ECO:0000269" key="3">
    <source>
    </source>
</evidence>
<evidence type="ECO:0000303" key="4">
    <source>
    </source>
</evidence>
<evidence type="ECO:0000305" key="5"/>
<reference key="1">
    <citation type="journal article" date="1996" name="Arch. Microbiol.">
        <title>Pentalenolactone-insensitive glyceraldehyde-3-phosphate dehydrogenase from Streptomyces arenae is closely related to GAPDH from thermostable eubacteria and plant chloroplasts.</title>
        <authorList>
            <person name="Froehlich K.-U."/>
            <person name="Kannwischer R."/>
            <person name="Ruediger M."/>
            <person name="Mecke D."/>
        </authorList>
    </citation>
    <scope>NUCLEOTIDE SEQUENCE [GENOMIC DNA]</scope>
    <scope>FUNCTION</scope>
    <scope>ACTIVITY REGULATION</scope>
    <scope>BIOPHYSICOCHEMICAL PROPERTIES</scope>
    <source>
        <strain>Tu469</strain>
    </source>
</reference>
<reference key="2">
    <citation type="journal article" date="1983" name="J. Bacteriol.">
        <title>Characterization of two glyceraldehyde-3-phosphate dehydrogenase isoenzymes from the pentalenolactone producer Streptomyces arenae.</title>
        <authorList>
            <person name="Maurer K.H."/>
            <person name="Pfeiffer F."/>
            <person name="Zehender H."/>
            <person name="Mecke D."/>
        </authorList>
    </citation>
    <scope>FUNCTION</scope>
    <scope>CATALYTIC ACTIVITY</scope>
    <scope>BIOPHYSICOCHEMICAL PROPERTIES</scope>
    <scope>INDUCTION</scope>
    <scope>SUBUNIT</scope>
    <source>
        <strain>Tu469</strain>
    </source>
</reference>
<name>G3P1_STRAE</name>
<keyword id="KW-0963">Cytoplasm</keyword>
<keyword id="KW-0324">Glycolysis</keyword>
<keyword id="KW-0520">NAD</keyword>
<keyword id="KW-0547">Nucleotide-binding</keyword>
<keyword id="KW-0560">Oxidoreductase</keyword>
<proteinExistence type="evidence at protein level"/>
<dbReference type="EC" id="1.2.1.12" evidence="2"/>
<dbReference type="EMBL" id="U44856">
    <property type="protein sequence ID" value="AAB00916.1"/>
    <property type="molecule type" value="Genomic_DNA"/>
</dbReference>
<dbReference type="SMR" id="P54226"/>
<dbReference type="SABIO-RK" id="P54226"/>
<dbReference type="UniPathway" id="UPA00109">
    <property type="reaction ID" value="UER00184"/>
</dbReference>
<dbReference type="GO" id="GO:0005737">
    <property type="term" value="C:cytoplasm"/>
    <property type="evidence" value="ECO:0007669"/>
    <property type="project" value="UniProtKB-SubCell"/>
</dbReference>
<dbReference type="GO" id="GO:0004365">
    <property type="term" value="F:glyceraldehyde-3-phosphate dehydrogenase (NAD+) (phosphorylating) activity"/>
    <property type="evidence" value="ECO:0000314"/>
    <property type="project" value="UniProtKB"/>
</dbReference>
<dbReference type="GO" id="GO:0051287">
    <property type="term" value="F:NAD binding"/>
    <property type="evidence" value="ECO:0000250"/>
    <property type="project" value="UniProtKB"/>
</dbReference>
<dbReference type="GO" id="GO:0050661">
    <property type="term" value="F:NADP binding"/>
    <property type="evidence" value="ECO:0007669"/>
    <property type="project" value="InterPro"/>
</dbReference>
<dbReference type="GO" id="GO:0006006">
    <property type="term" value="P:glucose metabolic process"/>
    <property type="evidence" value="ECO:0007669"/>
    <property type="project" value="InterPro"/>
</dbReference>
<dbReference type="GO" id="GO:0006096">
    <property type="term" value="P:glycolytic process"/>
    <property type="evidence" value="ECO:0007669"/>
    <property type="project" value="UniProtKB-UniPathway"/>
</dbReference>
<dbReference type="CDD" id="cd18126">
    <property type="entry name" value="GAPDH_I_C"/>
    <property type="match status" value="1"/>
</dbReference>
<dbReference type="CDD" id="cd05214">
    <property type="entry name" value="GAPDH_I_N"/>
    <property type="match status" value="1"/>
</dbReference>
<dbReference type="FunFam" id="3.30.360.10:FF:000002">
    <property type="entry name" value="Glyceraldehyde-3-phosphate dehydrogenase"/>
    <property type="match status" value="1"/>
</dbReference>
<dbReference type="FunFam" id="3.40.50.720:FF:000001">
    <property type="entry name" value="Glyceraldehyde-3-phosphate dehydrogenase"/>
    <property type="match status" value="1"/>
</dbReference>
<dbReference type="Gene3D" id="3.30.360.10">
    <property type="entry name" value="Dihydrodipicolinate Reductase, domain 2"/>
    <property type="match status" value="1"/>
</dbReference>
<dbReference type="Gene3D" id="3.40.50.720">
    <property type="entry name" value="NAD(P)-binding Rossmann-like Domain"/>
    <property type="match status" value="1"/>
</dbReference>
<dbReference type="InterPro" id="IPR020831">
    <property type="entry name" value="GlycerAld/Erythrose_P_DH"/>
</dbReference>
<dbReference type="InterPro" id="IPR020830">
    <property type="entry name" value="GlycerAld_3-P_DH_AS"/>
</dbReference>
<dbReference type="InterPro" id="IPR020829">
    <property type="entry name" value="GlycerAld_3-P_DH_cat"/>
</dbReference>
<dbReference type="InterPro" id="IPR020828">
    <property type="entry name" value="GlycerAld_3-P_DH_NAD(P)-bd"/>
</dbReference>
<dbReference type="InterPro" id="IPR006424">
    <property type="entry name" value="Glyceraldehyde-3-P_DH_1"/>
</dbReference>
<dbReference type="InterPro" id="IPR036291">
    <property type="entry name" value="NAD(P)-bd_dom_sf"/>
</dbReference>
<dbReference type="NCBIfam" id="TIGR01534">
    <property type="entry name" value="GAPDH-I"/>
    <property type="match status" value="1"/>
</dbReference>
<dbReference type="PANTHER" id="PTHR43148">
    <property type="entry name" value="GLYCERALDEHYDE-3-PHOSPHATE DEHYDROGENASE 2"/>
    <property type="match status" value="1"/>
</dbReference>
<dbReference type="Pfam" id="PF02800">
    <property type="entry name" value="Gp_dh_C"/>
    <property type="match status" value="1"/>
</dbReference>
<dbReference type="Pfam" id="PF00044">
    <property type="entry name" value="Gp_dh_N"/>
    <property type="match status" value="1"/>
</dbReference>
<dbReference type="PIRSF" id="PIRSF000149">
    <property type="entry name" value="GAP_DH"/>
    <property type="match status" value="1"/>
</dbReference>
<dbReference type="PRINTS" id="PR00078">
    <property type="entry name" value="G3PDHDRGNASE"/>
</dbReference>
<dbReference type="SMART" id="SM00846">
    <property type="entry name" value="Gp_dh_N"/>
    <property type="match status" value="1"/>
</dbReference>
<dbReference type="SUPFAM" id="SSF55347">
    <property type="entry name" value="Glyceraldehyde-3-phosphate dehydrogenase-like, C-terminal domain"/>
    <property type="match status" value="1"/>
</dbReference>
<dbReference type="SUPFAM" id="SSF51735">
    <property type="entry name" value="NAD(P)-binding Rossmann-fold domains"/>
    <property type="match status" value="1"/>
</dbReference>
<dbReference type="PROSITE" id="PS00071">
    <property type="entry name" value="GAPDH"/>
    <property type="match status" value="1"/>
</dbReference>
<protein>
    <recommendedName>
        <fullName evidence="4">Glyceraldehyde-3-phosphate dehydrogenase 1</fullName>
        <shortName evidence="4">GAPDH 1</shortName>
        <ecNumber evidence="2">1.2.1.12</ecNumber>
    </recommendedName>
    <alternativeName>
        <fullName evidence="4">NAD-dependent glyceraldehyde-3-phosphate dehydrogenase</fullName>
    </alternativeName>
    <alternativeName>
        <fullName evidence="4">PL-insensitive glyceraldehyde-3-phosphate dehydrogenase</fullName>
    </alternativeName>
</protein>
<gene>
    <name type="primary">gap1</name>
    <name type="synonym">gapR</name>
</gene>
<sequence>MTVRIGINGFGRIGRNVFRAAAARSSELEIVAVNDLGDVPTMAHLLAYDSILGRFPEEVTAEPGAIRVGDRTIKVLAERDPGALPWGDLGVDIVIESTGIFTDAAKARSHVDGGAKKVIIAAPASGEDFTVVLGVNDGDYDPERHTIISNASCTTNCLGVLAKVLHDAVGIDSGMMTTVHAYTQDQNLQDAPHKDLRRARAAALNIVPTSSGAAKAIGLVLPELAGRLDAFALRVPVPTGSVTDLTVTTRRGTSVEEVKEAYAAAASGPYKGLLSYVDAPLVSTDIVGDPASLFDAGLTRVCGPQVKVVGWYDNEWGYSNRLIDLATLIGSSL</sequence>
<feature type="chain" id="PRO_0000145699" description="Glyceraldehyde-3-phosphate dehydrogenase 1">
    <location>
        <begin position="1"/>
        <end position="333"/>
    </location>
</feature>
<feature type="active site" description="Nucleophile" evidence="1">
    <location>
        <position position="153"/>
    </location>
</feature>
<feature type="binding site" evidence="1">
    <location>
        <begin position="12"/>
        <end position="13"/>
    </location>
    <ligand>
        <name>NAD(+)</name>
        <dbReference type="ChEBI" id="CHEBI:57540"/>
    </ligand>
</feature>
<feature type="binding site" evidence="1">
    <location>
        <position position="35"/>
    </location>
    <ligand>
        <name>NAD(+)</name>
        <dbReference type="ChEBI" id="CHEBI:57540"/>
    </ligand>
</feature>
<feature type="binding site" evidence="1">
    <location>
        <position position="79"/>
    </location>
    <ligand>
        <name>NAD(+)</name>
        <dbReference type="ChEBI" id="CHEBI:57540"/>
    </ligand>
</feature>
<feature type="binding site" evidence="1">
    <location>
        <begin position="152"/>
        <end position="154"/>
    </location>
    <ligand>
        <name>D-glyceraldehyde 3-phosphate</name>
        <dbReference type="ChEBI" id="CHEBI:59776"/>
    </ligand>
</feature>
<feature type="binding site" evidence="1">
    <location>
        <position position="183"/>
    </location>
    <ligand>
        <name>D-glyceraldehyde 3-phosphate</name>
        <dbReference type="ChEBI" id="CHEBI:59776"/>
    </ligand>
</feature>
<feature type="binding site" evidence="1">
    <location>
        <position position="198"/>
    </location>
    <ligand>
        <name>D-glyceraldehyde 3-phosphate</name>
        <dbReference type="ChEBI" id="CHEBI:59776"/>
    </ligand>
</feature>
<feature type="binding site" evidence="1">
    <location>
        <begin position="211"/>
        <end position="212"/>
    </location>
    <ligand>
        <name>D-glyceraldehyde 3-phosphate</name>
        <dbReference type="ChEBI" id="CHEBI:59776"/>
    </ligand>
</feature>
<feature type="binding site" evidence="1">
    <location>
        <position position="234"/>
    </location>
    <ligand>
        <name>D-glyceraldehyde 3-phosphate</name>
        <dbReference type="ChEBI" id="CHEBI:59776"/>
    </ligand>
</feature>
<feature type="binding site" evidence="1">
    <location>
        <position position="314"/>
    </location>
    <ligand>
        <name>NAD(+)</name>
        <dbReference type="ChEBI" id="CHEBI:57540"/>
    </ligand>
</feature>
<feature type="site" description="Activates thiol group during catalysis" evidence="1">
    <location>
        <position position="180"/>
    </location>
</feature>
<comment type="function">
    <text evidence="2 3">Catalyzes the oxidative phosphorylation of glyceraldehyde 3-phosphate (G3P) to 1,3-bisphosphoglycerate (BPG) using the cofactor NAD. The first reaction step involves the formation of a hemiacetal intermediate between G3P and a cysteine residue, and this hemiacetal intermediate is then oxidized to a thioester, with concomitant reduction of NAD to NADH. The reduced NADH is then exchanged with the second NAD, and the thioester is attacked by a nucleophilic inorganic phosphate to produce BPG.</text>
</comment>
<comment type="catalytic activity">
    <reaction evidence="2">
        <text>D-glyceraldehyde 3-phosphate + phosphate + NAD(+) = (2R)-3-phospho-glyceroyl phosphate + NADH + H(+)</text>
        <dbReference type="Rhea" id="RHEA:10300"/>
        <dbReference type="ChEBI" id="CHEBI:15378"/>
        <dbReference type="ChEBI" id="CHEBI:43474"/>
        <dbReference type="ChEBI" id="CHEBI:57540"/>
        <dbReference type="ChEBI" id="CHEBI:57604"/>
        <dbReference type="ChEBI" id="CHEBI:57945"/>
        <dbReference type="ChEBI" id="CHEBI:59776"/>
        <dbReference type="EC" id="1.2.1.12"/>
    </reaction>
</comment>
<comment type="activity regulation">
    <text evidence="3">Resistant to pentalenolactone (PL).</text>
</comment>
<comment type="biophysicochemical properties">
    <kinetics>
        <KM evidence="2">120 uM for NAD (at pH 8 and 26 degrees Celsius)</KM>
        <KM evidence="2">100 uM for G3P (at pH 8 and 26 degrees Celsius)</KM>
    </kinetics>
    <temperatureDependence>
        <text evidence="3">Moderately thermotolerant.</text>
    </temperatureDependence>
</comment>
<comment type="pathway">
    <text evidence="5">Carbohydrate degradation; glycolysis; pyruvate from D-glyceraldehyde 3-phosphate: step 1/5.</text>
</comment>
<comment type="subunit">
    <text evidence="2">Homotetramer.</text>
</comment>
<comment type="subcellular location">
    <subcellularLocation>
        <location evidence="5">Cytoplasm</location>
    </subcellularLocation>
</comment>
<comment type="induction">
    <text evidence="2">In the presence of pentalenolactone (PL).</text>
</comment>
<comment type="similarity">
    <text evidence="5">Belongs to the glyceraldehyde-3-phosphate dehydrogenase family.</text>
</comment>
<organism>
    <name type="scientific">Streptomyces arenae</name>
    <dbReference type="NCBI Taxonomy" id="29301"/>
    <lineage>
        <taxon>Bacteria</taxon>
        <taxon>Bacillati</taxon>
        <taxon>Actinomycetota</taxon>
        <taxon>Actinomycetes</taxon>
        <taxon>Kitasatosporales</taxon>
        <taxon>Streptomycetaceae</taxon>
        <taxon>Streptomyces</taxon>
    </lineage>
</organism>